<proteinExistence type="inferred from homology"/>
<evidence type="ECO:0000255" key="1">
    <source>
        <dbReference type="HAMAP-Rule" id="MF_01328"/>
    </source>
</evidence>
<evidence type="ECO:0000256" key="2">
    <source>
        <dbReference type="SAM" id="MobiDB-lite"/>
    </source>
</evidence>
<evidence type="ECO:0000305" key="3"/>
<protein>
    <recommendedName>
        <fullName evidence="1">Large ribosomal subunit protein uL4</fullName>
    </recommendedName>
    <alternativeName>
        <fullName evidence="3">50S ribosomal protein L4</fullName>
    </alternativeName>
</protein>
<keyword id="KW-1185">Reference proteome</keyword>
<keyword id="KW-0687">Ribonucleoprotein</keyword>
<keyword id="KW-0689">Ribosomal protein</keyword>
<keyword id="KW-0694">RNA-binding</keyword>
<keyword id="KW-0699">rRNA-binding</keyword>
<name>RL4_LEVBA</name>
<sequence length="207" mass="22209">MTSVALYKQDGSQNGNVELNADIFGVEPNENVVFDTILMQRASLRQGTHAVKNRSAVRGGGKKPWRQKGTGRARQGSIRSPQWVGGGVVFGPTPRSYSYRLPKKVSRLALKSVLSQKVLDESFVVVDGLAFDAPKTKEFAAVLAGLNVTTKTLVVLEDDNVTAALAARNLTNVKVIPAKGLNVLDIADADKLVITQPALSQVEEVLA</sequence>
<accession>Q03PV8</accession>
<reference key="1">
    <citation type="journal article" date="2006" name="Proc. Natl. Acad. Sci. U.S.A.">
        <title>Comparative genomics of the lactic acid bacteria.</title>
        <authorList>
            <person name="Makarova K.S."/>
            <person name="Slesarev A."/>
            <person name="Wolf Y.I."/>
            <person name="Sorokin A."/>
            <person name="Mirkin B."/>
            <person name="Koonin E.V."/>
            <person name="Pavlov A."/>
            <person name="Pavlova N."/>
            <person name="Karamychev V."/>
            <person name="Polouchine N."/>
            <person name="Shakhova V."/>
            <person name="Grigoriev I."/>
            <person name="Lou Y."/>
            <person name="Rohksar D."/>
            <person name="Lucas S."/>
            <person name="Huang K."/>
            <person name="Goodstein D.M."/>
            <person name="Hawkins T."/>
            <person name="Plengvidhya V."/>
            <person name="Welker D."/>
            <person name="Hughes J."/>
            <person name="Goh Y."/>
            <person name="Benson A."/>
            <person name="Baldwin K."/>
            <person name="Lee J.-H."/>
            <person name="Diaz-Muniz I."/>
            <person name="Dosti B."/>
            <person name="Smeianov V."/>
            <person name="Wechter W."/>
            <person name="Barabote R."/>
            <person name="Lorca G."/>
            <person name="Altermann E."/>
            <person name="Barrangou R."/>
            <person name="Ganesan B."/>
            <person name="Xie Y."/>
            <person name="Rawsthorne H."/>
            <person name="Tamir D."/>
            <person name="Parker C."/>
            <person name="Breidt F."/>
            <person name="Broadbent J.R."/>
            <person name="Hutkins R."/>
            <person name="O'Sullivan D."/>
            <person name="Steele J."/>
            <person name="Unlu G."/>
            <person name="Saier M.H. Jr."/>
            <person name="Klaenhammer T."/>
            <person name="Richardson P."/>
            <person name="Kozyavkin S."/>
            <person name="Weimer B.C."/>
            <person name="Mills D.A."/>
        </authorList>
    </citation>
    <scope>NUCLEOTIDE SEQUENCE [LARGE SCALE GENOMIC DNA]</scope>
    <source>
        <strain>ATCC 367 / BCRC 12310 / CIP 105137 / JCM 1170 / LMG 11437 / NCIMB 947 / NCTC 947</strain>
    </source>
</reference>
<comment type="function">
    <text evidence="1">One of the primary rRNA binding proteins, this protein initially binds near the 5'-end of the 23S rRNA. It is important during the early stages of 50S assembly. It makes multiple contacts with different domains of the 23S rRNA in the assembled 50S subunit and ribosome.</text>
</comment>
<comment type="function">
    <text evidence="1">Forms part of the polypeptide exit tunnel.</text>
</comment>
<comment type="subunit">
    <text evidence="1">Part of the 50S ribosomal subunit.</text>
</comment>
<comment type="similarity">
    <text evidence="1">Belongs to the universal ribosomal protein uL4 family.</text>
</comment>
<dbReference type="EMBL" id="CP000416">
    <property type="protein sequence ID" value="ABJ64764.1"/>
    <property type="molecule type" value="Genomic_DNA"/>
</dbReference>
<dbReference type="RefSeq" id="WP_011668498.1">
    <property type="nucleotide sequence ID" value="NC_008497.1"/>
</dbReference>
<dbReference type="SMR" id="Q03PV8"/>
<dbReference type="STRING" id="387344.LVIS_1689"/>
<dbReference type="GeneID" id="56993550"/>
<dbReference type="KEGG" id="lbr:LVIS_1689"/>
<dbReference type="eggNOG" id="COG0088">
    <property type="taxonomic scope" value="Bacteria"/>
</dbReference>
<dbReference type="HOGENOM" id="CLU_041575_5_2_9"/>
<dbReference type="Proteomes" id="UP000001652">
    <property type="component" value="Chromosome"/>
</dbReference>
<dbReference type="GO" id="GO:1990904">
    <property type="term" value="C:ribonucleoprotein complex"/>
    <property type="evidence" value="ECO:0007669"/>
    <property type="project" value="UniProtKB-KW"/>
</dbReference>
<dbReference type="GO" id="GO:0005840">
    <property type="term" value="C:ribosome"/>
    <property type="evidence" value="ECO:0007669"/>
    <property type="project" value="UniProtKB-KW"/>
</dbReference>
<dbReference type="GO" id="GO:0019843">
    <property type="term" value="F:rRNA binding"/>
    <property type="evidence" value="ECO:0007669"/>
    <property type="project" value="UniProtKB-UniRule"/>
</dbReference>
<dbReference type="GO" id="GO:0003735">
    <property type="term" value="F:structural constituent of ribosome"/>
    <property type="evidence" value="ECO:0007669"/>
    <property type="project" value="InterPro"/>
</dbReference>
<dbReference type="GO" id="GO:0006412">
    <property type="term" value="P:translation"/>
    <property type="evidence" value="ECO:0007669"/>
    <property type="project" value="UniProtKB-UniRule"/>
</dbReference>
<dbReference type="FunFam" id="3.40.1370.10:FF:000003">
    <property type="entry name" value="50S ribosomal protein L4"/>
    <property type="match status" value="1"/>
</dbReference>
<dbReference type="Gene3D" id="3.40.1370.10">
    <property type="match status" value="1"/>
</dbReference>
<dbReference type="HAMAP" id="MF_01328_B">
    <property type="entry name" value="Ribosomal_uL4_B"/>
    <property type="match status" value="1"/>
</dbReference>
<dbReference type="InterPro" id="IPR002136">
    <property type="entry name" value="Ribosomal_uL4"/>
</dbReference>
<dbReference type="InterPro" id="IPR013005">
    <property type="entry name" value="Ribosomal_uL4-like"/>
</dbReference>
<dbReference type="InterPro" id="IPR023574">
    <property type="entry name" value="Ribosomal_uL4_dom_sf"/>
</dbReference>
<dbReference type="NCBIfam" id="TIGR03953">
    <property type="entry name" value="rplD_bact"/>
    <property type="match status" value="1"/>
</dbReference>
<dbReference type="PANTHER" id="PTHR10746">
    <property type="entry name" value="50S RIBOSOMAL PROTEIN L4"/>
    <property type="match status" value="1"/>
</dbReference>
<dbReference type="PANTHER" id="PTHR10746:SF6">
    <property type="entry name" value="LARGE RIBOSOMAL SUBUNIT PROTEIN UL4M"/>
    <property type="match status" value="1"/>
</dbReference>
<dbReference type="Pfam" id="PF00573">
    <property type="entry name" value="Ribosomal_L4"/>
    <property type="match status" value="1"/>
</dbReference>
<dbReference type="SUPFAM" id="SSF52166">
    <property type="entry name" value="Ribosomal protein L4"/>
    <property type="match status" value="1"/>
</dbReference>
<organism>
    <name type="scientific">Levilactobacillus brevis (strain ATCC 367 / BCRC 12310 / CIP 105137 / JCM 1170 / LMG 11437 / NCIMB 947 / NCTC 947)</name>
    <name type="common">Lactobacillus brevis</name>
    <dbReference type="NCBI Taxonomy" id="387344"/>
    <lineage>
        <taxon>Bacteria</taxon>
        <taxon>Bacillati</taxon>
        <taxon>Bacillota</taxon>
        <taxon>Bacilli</taxon>
        <taxon>Lactobacillales</taxon>
        <taxon>Lactobacillaceae</taxon>
        <taxon>Levilactobacillus</taxon>
    </lineage>
</organism>
<gene>
    <name evidence="1" type="primary">rplD</name>
    <name type="ordered locus">LVIS_1689</name>
</gene>
<feature type="chain" id="PRO_1000052420" description="Large ribosomal subunit protein uL4">
    <location>
        <begin position="1"/>
        <end position="207"/>
    </location>
</feature>
<feature type="region of interest" description="Disordered" evidence="2">
    <location>
        <begin position="49"/>
        <end position="77"/>
    </location>
</feature>
<feature type="compositionally biased region" description="Basic residues" evidence="2">
    <location>
        <begin position="60"/>
        <end position="71"/>
    </location>
</feature>